<evidence type="ECO:0000255" key="1">
    <source>
        <dbReference type="HAMAP-Rule" id="MF_01067"/>
    </source>
</evidence>
<dbReference type="EMBL" id="BA000003">
    <property type="protein sequence ID" value="BAB12986.1"/>
    <property type="molecule type" value="Genomic_DNA"/>
</dbReference>
<dbReference type="RefSeq" id="NP_240100.1">
    <property type="nucleotide sequence ID" value="NC_002528.1"/>
</dbReference>
<dbReference type="RefSeq" id="WP_010896040.1">
    <property type="nucleotide sequence ID" value="NC_002528.1"/>
</dbReference>
<dbReference type="STRING" id="563178.BUAP5A_271"/>
<dbReference type="EnsemblBacteria" id="BAB12986">
    <property type="protein sequence ID" value="BAB12986"/>
    <property type="gene ID" value="BAB12986"/>
</dbReference>
<dbReference type="KEGG" id="buc:BU276"/>
<dbReference type="PATRIC" id="fig|107806.10.peg.286"/>
<dbReference type="eggNOG" id="ENOG502Z96Y">
    <property type="taxonomic scope" value="Bacteria"/>
</dbReference>
<dbReference type="HOGENOM" id="CLU_073287_0_0_6"/>
<dbReference type="BioCyc" id="BAPH107806:GBZJ-271-MONOMER"/>
<dbReference type="Proteomes" id="UP000001806">
    <property type="component" value="Chromosome"/>
</dbReference>
<dbReference type="GO" id="GO:0005886">
    <property type="term" value="C:plasma membrane"/>
    <property type="evidence" value="ECO:0007669"/>
    <property type="project" value="UniProtKB-SubCell"/>
</dbReference>
<dbReference type="HAMAP" id="MF_01067">
    <property type="entry name" value="UPF0259"/>
    <property type="match status" value="1"/>
</dbReference>
<dbReference type="InterPro" id="IPR009627">
    <property type="entry name" value="UPF0259"/>
</dbReference>
<dbReference type="NCBIfam" id="NF002774">
    <property type="entry name" value="PRK02868.1"/>
    <property type="match status" value="1"/>
</dbReference>
<dbReference type="Pfam" id="PF06790">
    <property type="entry name" value="UPF0259"/>
    <property type="match status" value="1"/>
</dbReference>
<proteinExistence type="inferred from homology"/>
<name>Y276_BUCAI</name>
<gene>
    <name type="ordered locus">BU276</name>
</gene>
<reference key="1">
    <citation type="journal article" date="2000" name="Nature">
        <title>Genome sequence of the endocellular bacterial symbiont of aphids Buchnera sp. APS.</title>
        <authorList>
            <person name="Shigenobu S."/>
            <person name="Watanabe H."/>
            <person name="Hattori M."/>
            <person name="Sakaki Y."/>
            <person name="Ishikawa H."/>
        </authorList>
    </citation>
    <scope>NUCLEOTIDE SEQUENCE [LARGE SCALE GENOMIC DNA]</scope>
    <source>
        <strain>APS</strain>
    </source>
</reference>
<protein>
    <recommendedName>
        <fullName evidence="1">UPF0259 membrane protein BU276</fullName>
    </recommendedName>
</protein>
<organism>
    <name type="scientific">Buchnera aphidicola subsp. Acyrthosiphon pisum (strain APS)</name>
    <name type="common">Acyrthosiphon pisum symbiotic bacterium</name>
    <dbReference type="NCBI Taxonomy" id="107806"/>
    <lineage>
        <taxon>Bacteria</taxon>
        <taxon>Pseudomonadati</taxon>
        <taxon>Pseudomonadota</taxon>
        <taxon>Gammaproteobacteria</taxon>
        <taxon>Enterobacterales</taxon>
        <taxon>Erwiniaceae</taxon>
        <taxon>Buchnera</taxon>
    </lineage>
</organism>
<keyword id="KW-1003">Cell membrane</keyword>
<keyword id="KW-0472">Membrane</keyword>
<keyword id="KW-1185">Reference proteome</keyword>
<keyword id="KW-0812">Transmembrane</keyword>
<keyword id="KW-1133">Transmembrane helix</keyword>
<sequence length="247" mass="28874">MPITVNKLRHDTHHFFYKKIGAIFFISIFATFMNILIDMFIKPDMHIVSIMENNKFINTSSLLEFIQNMNLNEKHELLKYSILKIMESLISKTTLLGSIIILISVVSEPKKKSIVSSIRTFFLFFPSLFILNFLTTFIIQIGFMLLIIPGILLSIILSLSPIILFFKKNRLLDSIRLSMYISWKYIKIIGPGVLFWMCGKFILTMLLAHFSLINKNVLFLISNISMNILFSILIIYLFRFYMIFLRS</sequence>
<accession>P57364</accession>
<comment type="subcellular location">
    <subcellularLocation>
        <location evidence="1">Cell membrane</location>
        <topology evidence="1">Multi-pass membrane protein</topology>
    </subcellularLocation>
</comment>
<comment type="similarity">
    <text evidence="1">Belongs to the UPF0259 family.</text>
</comment>
<feature type="chain" id="PRO_0000206511" description="UPF0259 membrane protein BU276">
    <location>
        <begin position="1"/>
        <end position="247"/>
    </location>
</feature>
<feature type="transmembrane region" description="Helical" evidence="1">
    <location>
        <begin position="20"/>
        <end position="40"/>
    </location>
</feature>
<feature type="transmembrane region" description="Helical" evidence="1">
    <location>
        <begin position="85"/>
        <end position="105"/>
    </location>
</feature>
<feature type="transmembrane region" description="Helical" evidence="1">
    <location>
        <begin position="114"/>
        <end position="134"/>
    </location>
</feature>
<feature type="transmembrane region" description="Helical" evidence="1">
    <location>
        <begin position="137"/>
        <end position="157"/>
    </location>
</feature>
<feature type="transmembrane region" description="Helical" evidence="1">
    <location>
        <begin position="188"/>
        <end position="208"/>
    </location>
</feature>
<feature type="transmembrane region" description="Helical" evidence="1">
    <location>
        <begin position="218"/>
        <end position="238"/>
    </location>
</feature>